<keyword id="KW-0002">3D-structure</keyword>
<keyword id="KW-0964">Secreted</keyword>
<keyword id="KW-0732">Signal</keyword>
<keyword id="KW-0800">Toxin</keyword>
<keyword id="KW-0843">Virulence</keyword>
<dbReference type="EMBL" id="AF124500">
    <property type="protein sequence ID" value="AAD30989.1"/>
    <property type="molecule type" value="Genomic_DNA"/>
</dbReference>
<dbReference type="RefSeq" id="WP_010922229.1">
    <property type="nucleotide sequence ID" value="NZ_WVGJ01000001.1"/>
</dbReference>
<dbReference type="PDB" id="1ET9">
    <property type="method" value="X-ray"/>
    <property type="resolution" value="1.90 A"/>
    <property type="chains" value="A=33-236"/>
</dbReference>
<dbReference type="PDB" id="1EU4">
    <property type="method" value="X-ray"/>
    <property type="resolution" value="2.50 A"/>
    <property type="chains" value="A=33-236"/>
</dbReference>
<dbReference type="PDBsum" id="1ET9"/>
<dbReference type="PDBsum" id="1EU4"/>
<dbReference type="SMR" id="P0C0I6"/>
<dbReference type="PATRIC" id="fig|1314.197.peg.958"/>
<dbReference type="OMA" id="AQEACEC"/>
<dbReference type="EvolutionaryTrace" id="P0C0I6"/>
<dbReference type="GO" id="GO:0005576">
    <property type="term" value="C:extracellular region"/>
    <property type="evidence" value="ECO:0007669"/>
    <property type="project" value="UniProtKB-SubCell"/>
</dbReference>
<dbReference type="GO" id="GO:0090729">
    <property type="term" value="F:toxin activity"/>
    <property type="evidence" value="ECO:0007669"/>
    <property type="project" value="UniProtKB-KW"/>
</dbReference>
<dbReference type="Gene3D" id="2.40.50.110">
    <property type="match status" value="1"/>
</dbReference>
<dbReference type="Gene3D" id="3.10.20.120">
    <property type="match status" value="1"/>
</dbReference>
<dbReference type="InterPro" id="IPR008992">
    <property type="entry name" value="Enterotoxin"/>
</dbReference>
<dbReference type="InterPro" id="IPR006126">
    <property type="entry name" value="Staph/Strept_toxin_CS"/>
</dbReference>
<dbReference type="InterPro" id="IPR006173">
    <property type="entry name" value="Staph_tox_OB"/>
</dbReference>
<dbReference type="InterPro" id="IPR016091">
    <property type="entry name" value="SuperAg_toxin_C"/>
</dbReference>
<dbReference type="InterPro" id="IPR013307">
    <property type="entry name" value="Superantigen_bac"/>
</dbReference>
<dbReference type="InterPro" id="IPR006123">
    <property type="entry name" value="Toxin_b-grasp_Staph/Strep"/>
</dbReference>
<dbReference type="Pfam" id="PF02876">
    <property type="entry name" value="Stap_Strp_tox_C"/>
    <property type="match status" value="1"/>
</dbReference>
<dbReference type="Pfam" id="PF01123">
    <property type="entry name" value="Stap_Strp_toxin"/>
    <property type="match status" value="1"/>
</dbReference>
<dbReference type="PRINTS" id="PR01898">
    <property type="entry name" value="SAGSUPRFAMLY"/>
</dbReference>
<dbReference type="SUPFAM" id="SSF50203">
    <property type="entry name" value="Bacterial enterotoxins"/>
    <property type="match status" value="1"/>
</dbReference>
<dbReference type="SUPFAM" id="SSF54334">
    <property type="entry name" value="Superantigen toxins, C-terminal domain"/>
    <property type="match status" value="1"/>
</dbReference>
<dbReference type="PROSITE" id="PS00278">
    <property type="entry name" value="STAPH_STREP_TOXIN_2"/>
    <property type="match status" value="1"/>
</dbReference>
<name>SPEH_STRPY</name>
<proteinExistence type="evidence at protein level"/>
<gene>
    <name type="primary">speH</name>
</gene>
<evidence type="ECO:0000255" key="1"/>
<evidence type="ECO:0000305" key="2"/>
<evidence type="ECO:0007829" key="3">
    <source>
        <dbReference type="PDB" id="1ET9"/>
    </source>
</evidence>
<protein>
    <recommendedName>
        <fullName>Exotoxin type H</fullName>
    </recommendedName>
    <alternativeName>
        <fullName>SPE H</fullName>
    </alternativeName>
</protein>
<organism>
    <name type="scientific">Streptococcus pyogenes</name>
    <dbReference type="NCBI Taxonomy" id="1314"/>
    <lineage>
        <taxon>Bacteria</taxon>
        <taxon>Bacillati</taxon>
        <taxon>Bacillota</taxon>
        <taxon>Bacilli</taxon>
        <taxon>Lactobacillales</taxon>
        <taxon>Streptococcaceae</taxon>
        <taxon>Streptococcus</taxon>
    </lineage>
</organism>
<comment type="function">
    <text>Mitogenic for human peripheral blood lymphocytes.</text>
</comment>
<comment type="subcellular location">
    <subcellularLocation>
        <location>Secreted</location>
    </subcellularLocation>
</comment>
<comment type="miscellaneous">
    <text>Binds to major histocompatibility complex class II beta chain.</text>
</comment>
<comment type="similarity">
    <text evidence="2">Belongs to the staphylococcal/streptococcal toxin family.</text>
</comment>
<accession>P0C0I6</accession>
<accession>Q9X5C8</accession>
<reference key="1">
    <citation type="journal article" date="1999" name="J. Exp. Med.">
        <title>Identification and characterization of novel superantigens from Streptococcus pyogenes.</title>
        <authorList>
            <person name="Proft T."/>
            <person name="Moffatt S.L."/>
            <person name="Berkahn C.J."/>
            <person name="Fraser J.D."/>
        </authorList>
    </citation>
    <scope>NUCLEOTIDE SEQUENCE [GENOMIC DNA]</scope>
    <source>
        <strain>M15</strain>
    </source>
</reference>
<feature type="signal peptide" evidence="1">
    <location>
        <begin position="1"/>
        <end position="32"/>
    </location>
</feature>
<feature type="chain" id="PRO_0000035603" description="Exotoxin type H">
    <location>
        <begin position="33"/>
        <end position="236"/>
    </location>
</feature>
<feature type="helix" evidence="3">
    <location>
        <begin position="37"/>
        <end position="48"/>
    </location>
</feature>
<feature type="helix" evidence="3">
    <location>
        <begin position="50"/>
        <end position="52"/>
    </location>
</feature>
<feature type="strand" evidence="3">
    <location>
        <begin position="53"/>
        <end position="59"/>
    </location>
</feature>
<feature type="strand" evidence="3">
    <location>
        <begin position="70"/>
        <end position="74"/>
    </location>
</feature>
<feature type="strand" evidence="3">
    <location>
        <begin position="79"/>
        <end position="83"/>
    </location>
</feature>
<feature type="helix" evidence="3">
    <location>
        <begin position="88"/>
        <end position="93"/>
    </location>
</feature>
<feature type="strand" evidence="3">
    <location>
        <begin position="98"/>
        <end position="106"/>
    </location>
</feature>
<feature type="strand" evidence="3">
    <location>
        <begin position="116"/>
        <end position="119"/>
    </location>
</feature>
<feature type="strand" evidence="3">
    <location>
        <begin position="122"/>
        <end position="124"/>
    </location>
</feature>
<feature type="strand" evidence="3">
    <location>
        <begin position="132"/>
        <end position="140"/>
    </location>
</feature>
<feature type="strand" evidence="3">
    <location>
        <begin position="148"/>
        <end position="152"/>
    </location>
</feature>
<feature type="strand" evidence="3">
    <location>
        <begin position="154"/>
        <end position="158"/>
    </location>
</feature>
<feature type="helix" evidence="3">
    <location>
        <begin position="159"/>
        <end position="173"/>
    </location>
</feature>
<feature type="strand" evidence="3">
    <location>
        <begin position="179"/>
        <end position="181"/>
    </location>
</feature>
<feature type="strand" evidence="3">
    <location>
        <begin position="187"/>
        <end position="193"/>
    </location>
</feature>
<feature type="turn" evidence="3">
    <location>
        <begin position="194"/>
        <end position="196"/>
    </location>
</feature>
<feature type="strand" evidence="3">
    <location>
        <begin position="197"/>
        <end position="202"/>
    </location>
</feature>
<feature type="helix" evidence="3">
    <location>
        <begin position="211"/>
        <end position="215"/>
    </location>
</feature>
<feature type="helix" evidence="3">
    <location>
        <begin position="216"/>
        <end position="218"/>
    </location>
</feature>
<feature type="strand" evidence="3">
    <location>
        <begin position="223"/>
        <end position="225"/>
    </location>
</feature>
<feature type="strand" evidence="3">
    <location>
        <begin position="228"/>
        <end position="235"/>
    </location>
</feature>
<sequence>MRYNCRYSHIDKKIYSMIICLSFLLYSNVVQANSYNTTNRHNLESLYKHDSNLIEADSIKNSPDIVTSHMLKYSVKDKNLSVFFEKDWISQEFKDKEVDIYALSAQEVCECPGKRYEAFGGITLTNSEKKEIKVPVNVWDKSKQQPPMFITVNKPKVTAQEVDIKVRKLLIKKYDIYNNREQKYSKGTVTLDLNSGKDIVFDLYYFGNGDFNSMLKIYSNNERIDSTQFHVDVSIS</sequence>